<gene>
    <name type="primary">thrB</name>
    <name type="ordered locus">MJ1104</name>
</gene>
<organism>
    <name type="scientific">Methanocaldococcus jannaschii (strain ATCC 43067 / DSM 2661 / JAL-1 / JCM 10045 / NBRC 100440)</name>
    <name type="common">Methanococcus jannaschii</name>
    <dbReference type="NCBI Taxonomy" id="243232"/>
    <lineage>
        <taxon>Archaea</taxon>
        <taxon>Methanobacteriati</taxon>
        <taxon>Methanobacteriota</taxon>
        <taxon>Methanomada group</taxon>
        <taxon>Methanococci</taxon>
        <taxon>Methanococcales</taxon>
        <taxon>Methanocaldococcaceae</taxon>
        <taxon>Methanocaldococcus</taxon>
    </lineage>
</organism>
<name>KHSE_METJA</name>
<accession>Q58504</accession>
<keyword id="KW-0002">3D-structure</keyword>
<keyword id="KW-0028">Amino-acid biosynthesis</keyword>
<keyword id="KW-0067">ATP-binding</keyword>
<keyword id="KW-0963">Cytoplasm</keyword>
<keyword id="KW-0418">Kinase</keyword>
<keyword id="KW-0547">Nucleotide-binding</keyword>
<keyword id="KW-1185">Reference proteome</keyword>
<keyword id="KW-0791">Threonine biosynthesis</keyword>
<keyword id="KW-0808">Transferase</keyword>
<evidence type="ECO:0000250" key="1"/>
<evidence type="ECO:0000255" key="2"/>
<evidence type="ECO:0000305" key="3"/>
<evidence type="ECO:0007829" key="4">
    <source>
        <dbReference type="PDB" id="1H72"/>
    </source>
</evidence>
<evidence type="ECO:0007829" key="5">
    <source>
        <dbReference type="PDB" id="1H74"/>
    </source>
</evidence>
<dbReference type="EC" id="2.7.1.39"/>
<dbReference type="EMBL" id="L77117">
    <property type="protein sequence ID" value="AAB99107.1"/>
    <property type="status" value="ALT_INIT"/>
    <property type="molecule type" value="Genomic_DNA"/>
</dbReference>
<dbReference type="PIR" id="G64437">
    <property type="entry name" value="G64437"/>
</dbReference>
<dbReference type="RefSeq" id="WP_064496725.1">
    <property type="nucleotide sequence ID" value="NC_000909.1"/>
</dbReference>
<dbReference type="PDB" id="1FWK">
    <property type="method" value="X-ray"/>
    <property type="resolution" value="2.10 A"/>
    <property type="chains" value="A/B/C/D=1-296"/>
</dbReference>
<dbReference type="PDB" id="1FWL">
    <property type="method" value="X-ray"/>
    <property type="resolution" value="2.25 A"/>
    <property type="chains" value="A/B/C/D=1-296"/>
</dbReference>
<dbReference type="PDB" id="1H72">
    <property type="method" value="X-ray"/>
    <property type="resolution" value="1.80 A"/>
    <property type="chains" value="C=1-296"/>
</dbReference>
<dbReference type="PDB" id="1H73">
    <property type="method" value="X-ray"/>
    <property type="resolution" value="2.00 A"/>
    <property type="chains" value="A=1-296"/>
</dbReference>
<dbReference type="PDB" id="1H74">
    <property type="method" value="X-ray"/>
    <property type="resolution" value="1.90 A"/>
    <property type="chains" value="A/B/C/D=1-296"/>
</dbReference>
<dbReference type="PDBsum" id="1FWK"/>
<dbReference type="PDBsum" id="1FWL"/>
<dbReference type="PDBsum" id="1H72"/>
<dbReference type="PDBsum" id="1H73"/>
<dbReference type="PDBsum" id="1H74"/>
<dbReference type="SMR" id="Q58504"/>
<dbReference type="FunCoup" id="Q58504">
    <property type="interactions" value="153"/>
</dbReference>
<dbReference type="STRING" id="243232.MJ_1104"/>
<dbReference type="PaxDb" id="243232-MJ_1104"/>
<dbReference type="EnsemblBacteria" id="AAB99107">
    <property type="protein sequence ID" value="AAB99107"/>
    <property type="gene ID" value="MJ_1104"/>
</dbReference>
<dbReference type="GeneID" id="1452001"/>
<dbReference type="KEGG" id="mja:MJ_1104"/>
<dbReference type="eggNOG" id="arCOG01027">
    <property type="taxonomic scope" value="Archaea"/>
</dbReference>
<dbReference type="HOGENOM" id="CLU_041243_1_1_2"/>
<dbReference type="InParanoid" id="Q58504"/>
<dbReference type="OrthoDB" id="28273at2157"/>
<dbReference type="PhylomeDB" id="Q58504"/>
<dbReference type="BioCyc" id="MetaCyc:MONOMER-14633"/>
<dbReference type="BRENDA" id="2.7.1.39">
    <property type="organism ID" value="3260"/>
</dbReference>
<dbReference type="SABIO-RK" id="Q58504"/>
<dbReference type="UniPathway" id="UPA00050">
    <property type="reaction ID" value="UER00064"/>
</dbReference>
<dbReference type="EvolutionaryTrace" id="Q58504"/>
<dbReference type="Proteomes" id="UP000000805">
    <property type="component" value="Chromosome"/>
</dbReference>
<dbReference type="GO" id="GO:0005737">
    <property type="term" value="C:cytoplasm"/>
    <property type="evidence" value="ECO:0007669"/>
    <property type="project" value="UniProtKB-SubCell"/>
</dbReference>
<dbReference type="GO" id="GO:0005524">
    <property type="term" value="F:ATP binding"/>
    <property type="evidence" value="ECO:0007669"/>
    <property type="project" value="UniProtKB-UniRule"/>
</dbReference>
<dbReference type="GO" id="GO:0004413">
    <property type="term" value="F:homoserine kinase activity"/>
    <property type="evidence" value="ECO:0007669"/>
    <property type="project" value="UniProtKB-UniRule"/>
</dbReference>
<dbReference type="GO" id="GO:0009088">
    <property type="term" value="P:threonine biosynthetic process"/>
    <property type="evidence" value="ECO:0007669"/>
    <property type="project" value="UniProtKB-UniRule"/>
</dbReference>
<dbReference type="Gene3D" id="3.30.230.10">
    <property type="match status" value="1"/>
</dbReference>
<dbReference type="Gene3D" id="3.30.70.890">
    <property type="entry name" value="GHMP kinase, C-terminal domain"/>
    <property type="match status" value="1"/>
</dbReference>
<dbReference type="HAMAP" id="MF_00384">
    <property type="entry name" value="Homoser_kinase"/>
    <property type="match status" value="1"/>
</dbReference>
<dbReference type="InterPro" id="IPR013750">
    <property type="entry name" value="GHMP_kinase_C_dom"/>
</dbReference>
<dbReference type="InterPro" id="IPR036554">
    <property type="entry name" value="GHMP_kinase_C_sf"/>
</dbReference>
<dbReference type="InterPro" id="IPR006204">
    <property type="entry name" value="GHMP_kinase_N_dom"/>
</dbReference>
<dbReference type="InterPro" id="IPR006203">
    <property type="entry name" value="GHMP_knse_ATP-bd_CS"/>
</dbReference>
<dbReference type="InterPro" id="IPR000870">
    <property type="entry name" value="Homoserine_kinase"/>
</dbReference>
<dbReference type="InterPro" id="IPR020568">
    <property type="entry name" value="Ribosomal_Su5_D2-typ_SF"/>
</dbReference>
<dbReference type="InterPro" id="IPR014721">
    <property type="entry name" value="Ribsml_uS5_D2-typ_fold_subgr"/>
</dbReference>
<dbReference type="NCBIfam" id="NF002288">
    <property type="entry name" value="PRK01212.1-4"/>
    <property type="match status" value="1"/>
</dbReference>
<dbReference type="NCBIfam" id="TIGR00191">
    <property type="entry name" value="thrB"/>
    <property type="match status" value="1"/>
</dbReference>
<dbReference type="PANTHER" id="PTHR20861:SF1">
    <property type="entry name" value="HOMOSERINE KINASE"/>
    <property type="match status" value="1"/>
</dbReference>
<dbReference type="PANTHER" id="PTHR20861">
    <property type="entry name" value="HOMOSERINE/4-DIPHOSPHOCYTIDYL-2-C-METHYL-D-ERYTHRITOL KINASE"/>
    <property type="match status" value="1"/>
</dbReference>
<dbReference type="Pfam" id="PF08544">
    <property type="entry name" value="GHMP_kinases_C"/>
    <property type="match status" value="1"/>
</dbReference>
<dbReference type="Pfam" id="PF00288">
    <property type="entry name" value="GHMP_kinases_N"/>
    <property type="match status" value="1"/>
</dbReference>
<dbReference type="PIRSF" id="PIRSF000676">
    <property type="entry name" value="Homoser_kin"/>
    <property type="match status" value="1"/>
</dbReference>
<dbReference type="PRINTS" id="PR00958">
    <property type="entry name" value="HOMSERKINASE"/>
</dbReference>
<dbReference type="SUPFAM" id="SSF55060">
    <property type="entry name" value="GHMP Kinase, C-terminal domain"/>
    <property type="match status" value="1"/>
</dbReference>
<dbReference type="SUPFAM" id="SSF54211">
    <property type="entry name" value="Ribosomal protein S5 domain 2-like"/>
    <property type="match status" value="1"/>
</dbReference>
<dbReference type="PROSITE" id="PS00627">
    <property type="entry name" value="GHMP_KINASES_ATP"/>
    <property type="match status" value="1"/>
</dbReference>
<reference key="1">
    <citation type="journal article" date="1996" name="Science">
        <title>Complete genome sequence of the methanogenic archaeon, Methanococcus jannaschii.</title>
        <authorList>
            <person name="Bult C.J."/>
            <person name="White O."/>
            <person name="Olsen G.J."/>
            <person name="Zhou L."/>
            <person name="Fleischmann R.D."/>
            <person name="Sutton G.G."/>
            <person name="Blake J.A."/>
            <person name="FitzGerald L.M."/>
            <person name="Clayton R.A."/>
            <person name="Gocayne J.D."/>
            <person name="Kerlavage A.R."/>
            <person name="Dougherty B.A."/>
            <person name="Tomb J.-F."/>
            <person name="Adams M.D."/>
            <person name="Reich C.I."/>
            <person name="Overbeek R."/>
            <person name="Kirkness E.F."/>
            <person name="Weinstock K.G."/>
            <person name="Merrick J.M."/>
            <person name="Glodek A."/>
            <person name="Scott J.L."/>
            <person name="Geoghagen N.S.M."/>
            <person name="Weidman J.F."/>
            <person name="Fuhrmann J.L."/>
            <person name="Nguyen D."/>
            <person name="Utterback T.R."/>
            <person name="Kelley J.M."/>
            <person name="Peterson J.D."/>
            <person name="Sadow P.W."/>
            <person name="Hanna M.C."/>
            <person name="Cotton M.D."/>
            <person name="Roberts K.M."/>
            <person name="Hurst M.A."/>
            <person name="Kaine B.P."/>
            <person name="Borodovsky M."/>
            <person name="Klenk H.-P."/>
            <person name="Fraser C.M."/>
            <person name="Smith H.O."/>
            <person name="Woese C.R."/>
            <person name="Venter J.C."/>
        </authorList>
    </citation>
    <scope>NUCLEOTIDE SEQUENCE [LARGE SCALE GENOMIC DNA]</scope>
    <source>
        <strain>ATCC 43067 / DSM 2661 / JAL-1 / JCM 10045 / NBRC 100440</strain>
    </source>
</reference>
<reference key="2">
    <citation type="journal article" date="2000" name="Structure">
        <title>Structure and mechanism of homoserine kinase: prototype for the GHMP kinase superfamily.</title>
        <authorList>
            <person name="Zhou T."/>
            <person name="Daugherty M."/>
            <person name="Grishin N.V."/>
            <person name="Osterman A.L."/>
            <person name="Zhang H."/>
        </authorList>
    </citation>
    <scope>X-RAY CRYSTALLOGRAPHY (2.1 ANGSTROMS)</scope>
</reference>
<protein>
    <recommendedName>
        <fullName>Homoserine kinase</fullName>
        <shortName>HK</shortName>
        <shortName>HSK</shortName>
        <ecNumber>2.7.1.39</ecNumber>
    </recommendedName>
</protein>
<sequence length="296" mass="32259">MKVRVKAPCTSANLGVGFDVFGLCLKEPYDVIEVEAIDDKEIIIEVDDKNIPTDPDKNVAGIVAKKMIDDFNIGKGVKITIKKGVKAGSGLGSSAASSAGTAYAINELFKLNLDKLKLVDYASYGELASSGAKHADNVAPAIFGGFTMVTNYEPLEVLHIPIDFKLDILIAIPNISINTKEAREILPKAVGLKDLVNNVGKACGMVYALYNKDKSLFGRYMMSDKVIEPVRGKLIPNYFKIKEEVKDKVYGITISGSGPSIIAFPKEEFIDEVENILRDYYENTIRTEVGKGVEVV</sequence>
<feature type="chain" id="PRO_0000156641" description="Homoserine kinase">
    <location>
        <begin position="1"/>
        <end position="296"/>
    </location>
</feature>
<feature type="binding site" evidence="2">
    <location>
        <begin position="86"/>
        <end position="96"/>
    </location>
    <ligand>
        <name>ATP</name>
        <dbReference type="ChEBI" id="CHEBI:30616"/>
    </ligand>
</feature>
<feature type="strand" evidence="4">
    <location>
        <begin position="2"/>
        <end position="12"/>
    </location>
</feature>
<feature type="helix" evidence="4">
    <location>
        <begin position="15"/>
        <end position="17"/>
    </location>
</feature>
<feature type="turn" evidence="4">
    <location>
        <begin position="18"/>
        <end position="20"/>
    </location>
</feature>
<feature type="strand" evidence="4">
    <location>
        <begin position="21"/>
        <end position="47"/>
    </location>
</feature>
<feature type="turn" evidence="4">
    <location>
        <begin position="55"/>
        <end position="57"/>
    </location>
</feature>
<feature type="helix" evidence="4">
    <location>
        <begin position="59"/>
        <end position="70"/>
    </location>
</feature>
<feature type="strand" evidence="4">
    <location>
        <begin position="76"/>
        <end position="82"/>
    </location>
</feature>
<feature type="strand" evidence="4">
    <location>
        <begin position="89"/>
        <end position="91"/>
    </location>
</feature>
<feature type="helix" evidence="4">
    <location>
        <begin position="93"/>
        <end position="108"/>
    </location>
</feature>
<feature type="helix" evidence="4">
    <location>
        <begin position="115"/>
        <end position="130"/>
    </location>
</feature>
<feature type="helix" evidence="4">
    <location>
        <begin position="138"/>
        <end position="143"/>
    </location>
</feature>
<feature type="strand" evidence="4">
    <location>
        <begin position="145"/>
        <end position="151"/>
    </location>
</feature>
<feature type="turn" evidence="4">
    <location>
        <begin position="152"/>
        <end position="155"/>
    </location>
</feature>
<feature type="strand" evidence="4">
    <location>
        <begin position="156"/>
        <end position="160"/>
    </location>
</feature>
<feature type="strand" evidence="4">
    <location>
        <begin position="168"/>
        <end position="171"/>
    </location>
</feature>
<feature type="helix" evidence="4">
    <location>
        <begin position="179"/>
        <end position="184"/>
    </location>
</feature>
<feature type="strand" evidence="5">
    <location>
        <begin position="188"/>
        <end position="191"/>
    </location>
</feature>
<feature type="helix" evidence="4">
    <location>
        <begin position="192"/>
        <end position="210"/>
    </location>
</feature>
<feature type="helix" evidence="4">
    <location>
        <begin position="214"/>
        <end position="221"/>
    </location>
</feature>
<feature type="helix" evidence="4">
    <location>
        <begin position="228"/>
        <end position="232"/>
    </location>
</feature>
<feature type="helix" evidence="4">
    <location>
        <begin position="238"/>
        <end position="245"/>
    </location>
</feature>
<feature type="helix" evidence="4">
    <location>
        <begin position="246"/>
        <end position="248"/>
    </location>
</feature>
<feature type="strand" evidence="4">
    <location>
        <begin position="249"/>
        <end position="254"/>
    </location>
</feature>
<feature type="strand" evidence="4">
    <location>
        <begin position="261"/>
        <end position="265"/>
    </location>
</feature>
<feature type="helix" evidence="4">
    <location>
        <begin position="267"/>
        <end position="269"/>
    </location>
</feature>
<feature type="helix" evidence="4">
    <location>
        <begin position="270"/>
        <end position="280"/>
    </location>
</feature>
<feature type="strand" evidence="4">
    <location>
        <begin position="284"/>
        <end position="287"/>
    </location>
</feature>
<feature type="strand" evidence="5">
    <location>
        <begin position="293"/>
        <end position="295"/>
    </location>
</feature>
<comment type="function">
    <text evidence="1">Catalyzes the ATP-dependent phosphorylation of L-homoserine to L-homoserine phosphate.</text>
</comment>
<comment type="catalytic activity">
    <reaction>
        <text>L-homoserine + ATP = O-phospho-L-homoserine + ADP + H(+)</text>
        <dbReference type="Rhea" id="RHEA:13985"/>
        <dbReference type="ChEBI" id="CHEBI:15378"/>
        <dbReference type="ChEBI" id="CHEBI:30616"/>
        <dbReference type="ChEBI" id="CHEBI:57476"/>
        <dbReference type="ChEBI" id="CHEBI:57590"/>
        <dbReference type="ChEBI" id="CHEBI:456216"/>
        <dbReference type="EC" id="2.7.1.39"/>
    </reaction>
</comment>
<comment type="pathway">
    <text>Amino-acid biosynthesis; L-threonine biosynthesis; L-threonine from L-aspartate: step 4/5.</text>
</comment>
<comment type="subcellular location">
    <subcellularLocation>
        <location evidence="3">Cytoplasm</location>
    </subcellularLocation>
</comment>
<comment type="similarity">
    <text evidence="3">Belongs to the GHMP kinase family. Homoserine kinase subfamily.</text>
</comment>
<comment type="sequence caution" evidence="3">
    <conflict type="erroneous initiation">
        <sequence resource="EMBL-CDS" id="AAB99107"/>
    </conflict>
</comment>
<proteinExistence type="evidence at protein level"/>